<organism>
    <name type="scientific">Mus musculus</name>
    <name type="common">Mouse</name>
    <dbReference type="NCBI Taxonomy" id="10090"/>
    <lineage>
        <taxon>Eukaryota</taxon>
        <taxon>Metazoa</taxon>
        <taxon>Chordata</taxon>
        <taxon>Craniata</taxon>
        <taxon>Vertebrata</taxon>
        <taxon>Euteleostomi</taxon>
        <taxon>Mammalia</taxon>
        <taxon>Eutheria</taxon>
        <taxon>Euarchontoglires</taxon>
        <taxon>Glires</taxon>
        <taxon>Rodentia</taxon>
        <taxon>Myomorpha</taxon>
        <taxon>Muroidea</taxon>
        <taxon>Muridae</taxon>
        <taxon>Murinae</taxon>
        <taxon>Mus</taxon>
        <taxon>Mus</taxon>
    </lineage>
</organism>
<gene>
    <name evidence="10" type="primary">Zdhhc12</name>
</gene>
<dbReference type="EC" id="2.3.1.225" evidence="9"/>
<dbReference type="EMBL" id="AK087676">
    <property type="protein sequence ID" value="BAC39965.1"/>
    <property type="molecule type" value="mRNA"/>
</dbReference>
<dbReference type="EMBL" id="AK013074">
    <property type="status" value="NOT_ANNOTATED_CDS"/>
    <property type="molecule type" value="mRNA"/>
</dbReference>
<dbReference type="EMBL" id="BC021432">
    <property type="protein sequence ID" value="AAH21432.1"/>
    <property type="molecule type" value="mRNA"/>
</dbReference>
<dbReference type="CCDS" id="CCDS15868.1">
    <molecule id="Q8VC90-1"/>
</dbReference>
<dbReference type="CCDS" id="CCDS15869.1">
    <molecule id="Q8VC90-2"/>
</dbReference>
<dbReference type="RefSeq" id="NP_001032851.1">
    <molecule id="Q8VC90-1"/>
    <property type="nucleotide sequence ID" value="NM_001037762.1"/>
</dbReference>
<dbReference type="RefSeq" id="NP_079704.2">
    <molecule id="Q8VC90-2"/>
    <property type="nucleotide sequence ID" value="NM_025428.2"/>
</dbReference>
<dbReference type="SMR" id="Q8VC90"/>
<dbReference type="FunCoup" id="Q8VC90">
    <property type="interactions" value="601"/>
</dbReference>
<dbReference type="STRING" id="10090.ENSMUSP00000080521"/>
<dbReference type="PhosphoSitePlus" id="Q8VC90"/>
<dbReference type="SwissPalm" id="Q8VC90"/>
<dbReference type="PaxDb" id="10090-ENSMUSP00000080521"/>
<dbReference type="PeptideAtlas" id="Q8VC90"/>
<dbReference type="ProteomicsDB" id="298511">
    <molecule id="Q8VC90-1"/>
</dbReference>
<dbReference type="ProteomicsDB" id="298512">
    <molecule id="Q8VC90-2"/>
</dbReference>
<dbReference type="Antibodypedia" id="67200">
    <property type="antibodies" value="63 antibodies from 14 providers"/>
</dbReference>
<dbReference type="DNASU" id="66220"/>
<dbReference type="Ensembl" id="ENSMUST00000081838.7">
    <molecule id="Q8VC90-2"/>
    <property type="protein sequence ID" value="ENSMUSP00000080521.7"/>
    <property type="gene ID" value="ENSMUSG00000015335.17"/>
</dbReference>
<dbReference type="Ensembl" id="ENSMUST00000102865.11">
    <molecule id="Q8VC90-1"/>
    <property type="protein sequence ID" value="ENSMUSP00000099929.5"/>
    <property type="gene ID" value="ENSMUSG00000015335.17"/>
</dbReference>
<dbReference type="GeneID" id="66220"/>
<dbReference type="KEGG" id="mmu:66220"/>
<dbReference type="UCSC" id="uc008jbd.1">
    <molecule id="Q8VC90-2"/>
    <property type="organism name" value="mouse"/>
</dbReference>
<dbReference type="UCSC" id="uc008jbe.1">
    <molecule id="Q8VC90-1"/>
    <property type="organism name" value="mouse"/>
</dbReference>
<dbReference type="AGR" id="MGI:1913470"/>
<dbReference type="CTD" id="84885"/>
<dbReference type="MGI" id="MGI:1913470">
    <property type="gene designation" value="Zdhhc12"/>
</dbReference>
<dbReference type="VEuPathDB" id="HostDB:ENSMUSG00000015335"/>
<dbReference type="eggNOG" id="KOG1311">
    <property type="taxonomic scope" value="Eukaryota"/>
</dbReference>
<dbReference type="GeneTree" id="ENSGT00940000156902"/>
<dbReference type="HOGENOM" id="CLU_031257_2_0_1"/>
<dbReference type="InParanoid" id="Q8VC90"/>
<dbReference type="OMA" id="FISPHRI"/>
<dbReference type="OrthoDB" id="88593at9989"/>
<dbReference type="PhylomeDB" id="Q8VC90"/>
<dbReference type="TreeFam" id="TF329809"/>
<dbReference type="BioGRID-ORCS" id="66220">
    <property type="hits" value="2 hits in 78 CRISPR screens"/>
</dbReference>
<dbReference type="PRO" id="PR:Q8VC90"/>
<dbReference type="Proteomes" id="UP000000589">
    <property type="component" value="Chromosome 2"/>
</dbReference>
<dbReference type="RNAct" id="Q8VC90">
    <property type="molecule type" value="protein"/>
</dbReference>
<dbReference type="Bgee" id="ENSMUSG00000015335">
    <property type="expression patterns" value="Expressed in yolk sac and 199 other cell types or tissues"/>
</dbReference>
<dbReference type="GO" id="GO:0043197">
    <property type="term" value="C:dendritic spine"/>
    <property type="evidence" value="ECO:0007669"/>
    <property type="project" value="Ensembl"/>
</dbReference>
<dbReference type="GO" id="GO:0005789">
    <property type="term" value="C:endoplasmic reticulum membrane"/>
    <property type="evidence" value="ECO:0007669"/>
    <property type="project" value="UniProtKB-SubCell"/>
</dbReference>
<dbReference type="GO" id="GO:0005794">
    <property type="term" value="C:Golgi apparatus"/>
    <property type="evidence" value="ECO:0000314"/>
    <property type="project" value="UniProtKB"/>
</dbReference>
<dbReference type="GO" id="GO:0000139">
    <property type="term" value="C:Golgi membrane"/>
    <property type="evidence" value="ECO:0007669"/>
    <property type="project" value="UniProtKB-SubCell"/>
</dbReference>
<dbReference type="GO" id="GO:0019706">
    <property type="term" value="F:protein-cysteine S-palmitoyltransferase activity"/>
    <property type="evidence" value="ECO:0000315"/>
    <property type="project" value="UniProtKB"/>
</dbReference>
<dbReference type="GO" id="GO:0097116">
    <property type="term" value="P:gephyrin clustering involved in postsynaptic density assembly"/>
    <property type="evidence" value="ECO:0000315"/>
    <property type="project" value="UniProtKB"/>
</dbReference>
<dbReference type="GO" id="GO:1900226">
    <property type="term" value="P:negative regulation of NLRP3 inflammasome complex assembly"/>
    <property type="evidence" value="ECO:0000250"/>
    <property type="project" value="UniProtKB"/>
</dbReference>
<dbReference type="GO" id="GO:0018230">
    <property type="term" value="P:peptidyl-L-cysteine S-palmitoylation"/>
    <property type="evidence" value="ECO:0000315"/>
    <property type="project" value="UniProtKB"/>
</dbReference>
<dbReference type="GO" id="GO:0032230">
    <property type="term" value="P:positive regulation of synaptic transmission, GABAergic"/>
    <property type="evidence" value="ECO:0000315"/>
    <property type="project" value="UniProtKB"/>
</dbReference>
<dbReference type="InterPro" id="IPR001594">
    <property type="entry name" value="Palmitoyltrfase_DHHC"/>
</dbReference>
<dbReference type="InterPro" id="IPR039859">
    <property type="entry name" value="PFA4/ZDH16/20/ERF2-like"/>
</dbReference>
<dbReference type="PANTHER" id="PTHR22883:SF301">
    <property type="entry name" value="PALMITOYLTRANSFERASE ZDHHC12"/>
    <property type="match status" value="1"/>
</dbReference>
<dbReference type="PANTHER" id="PTHR22883">
    <property type="entry name" value="ZINC FINGER DHHC DOMAIN CONTAINING PROTEIN"/>
    <property type="match status" value="1"/>
</dbReference>
<dbReference type="Pfam" id="PF01529">
    <property type="entry name" value="DHHC"/>
    <property type="match status" value="1"/>
</dbReference>
<dbReference type="PROSITE" id="PS50216">
    <property type="entry name" value="DHHC"/>
    <property type="match status" value="1"/>
</dbReference>
<accession>Q8VC90</accession>
<accession>Q9CZ24</accession>
<accession>Q9D0T6</accession>
<protein>
    <recommendedName>
        <fullName evidence="9">Palmitoyltransferase ZDHHC12</fullName>
        <ecNumber evidence="9">2.3.1.225</ecNumber>
    </recommendedName>
    <alternativeName>
        <fullName evidence="2">DHHC domain-containing cysteine-rich protein 12</fullName>
        <shortName evidence="2">DHHC-12</shortName>
    </alternativeName>
    <alternativeName>
        <fullName evidence="10">Zinc finger DHHC domain-containing protein 12</fullName>
    </alternativeName>
</protein>
<reference key="1">
    <citation type="journal article" date="2005" name="Science">
        <title>The transcriptional landscape of the mammalian genome.</title>
        <authorList>
            <person name="Carninci P."/>
            <person name="Kasukawa T."/>
            <person name="Katayama S."/>
            <person name="Gough J."/>
            <person name="Frith M.C."/>
            <person name="Maeda N."/>
            <person name="Oyama R."/>
            <person name="Ravasi T."/>
            <person name="Lenhard B."/>
            <person name="Wells C."/>
            <person name="Kodzius R."/>
            <person name="Shimokawa K."/>
            <person name="Bajic V.B."/>
            <person name="Brenner S.E."/>
            <person name="Batalov S."/>
            <person name="Forrest A.R."/>
            <person name="Zavolan M."/>
            <person name="Davis M.J."/>
            <person name="Wilming L.G."/>
            <person name="Aidinis V."/>
            <person name="Allen J.E."/>
            <person name="Ambesi-Impiombato A."/>
            <person name="Apweiler R."/>
            <person name="Aturaliya R.N."/>
            <person name="Bailey T.L."/>
            <person name="Bansal M."/>
            <person name="Baxter L."/>
            <person name="Beisel K.W."/>
            <person name="Bersano T."/>
            <person name="Bono H."/>
            <person name="Chalk A.M."/>
            <person name="Chiu K.P."/>
            <person name="Choudhary V."/>
            <person name="Christoffels A."/>
            <person name="Clutterbuck D.R."/>
            <person name="Crowe M.L."/>
            <person name="Dalla E."/>
            <person name="Dalrymple B.P."/>
            <person name="de Bono B."/>
            <person name="Della Gatta G."/>
            <person name="di Bernardo D."/>
            <person name="Down T."/>
            <person name="Engstrom P."/>
            <person name="Fagiolini M."/>
            <person name="Faulkner G."/>
            <person name="Fletcher C.F."/>
            <person name="Fukushima T."/>
            <person name="Furuno M."/>
            <person name="Futaki S."/>
            <person name="Gariboldi M."/>
            <person name="Georgii-Hemming P."/>
            <person name="Gingeras T.R."/>
            <person name="Gojobori T."/>
            <person name="Green R.E."/>
            <person name="Gustincich S."/>
            <person name="Harbers M."/>
            <person name="Hayashi Y."/>
            <person name="Hensch T.K."/>
            <person name="Hirokawa N."/>
            <person name="Hill D."/>
            <person name="Huminiecki L."/>
            <person name="Iacono M."/>
            <person name="Ikeo K."/>
            <person name="Iwama A."/>
            <person name="Ishikawa T."/>
            <person name="Jakt M."/>
            <person name="Kanapin A."/>
            <person name="Katoh M."/>
            <person name="Kawasawa Y."/>
            <person name="Kelso J."/>
            <person name="Kitamura H."/>
            <person name="Kitano H."/>
            <person name="Kollias G."/>
            <person name="Krishnan S.P."/>
            <person name="Kruger A."/>
            <person name="Kummerfeld S.K."/>
            <person name="Kurochkin I.V."/>
            <person name="Lareau L.F."/>
            <person name="Lazarevic D."/>
            <person name="Lipovich L."/>
            <person name="Liu J."/>
            <person name="Liuni S."/>
            <person name="McWilliam S."/>
            <person name="Madan Babu M."/>
            <person name="Madera M."/>
            <person name="Marchionni L."/>
            <person name="Matsuda H."/>
            <person name="Matsuzawa S."/>
            <person name="Miki H."/>
            <person name="Mignone F."/>
            <person name="Miyake S."/>
            <person name="Morris K."/>
            <person name="Mottagui-Tabar S."/>
            <person name="Mulder N."/>
            <person name="Nakano N."/>
            <person name="Nakauchi H."/>
            <person name="Ng P."/>
            <person name="Nilsson R."/>
            <person name="Nishiguchi S."/>
            <person name="Nishikawa S."/>
            <person name="Nori F."/>
            <person name="Ohara O."/>
            <person name="Okazaki Y."/>
            <person name="Orlando V."/>
            <person name="Pang K.C."/>
            <person name="Pavan W.J."/>
            <person name="Pavesi G."/>
            <person name="Pesole G."/>
            <person name="Petrovsky N."/>
            <person name="Piazza S."/>
            <person name="Reed J."/>
            <person name="Reid J.F."/>
            <person name="Ring B.Z."/>
            <person name="Ringwald M."/>
            <person name="Rost B."/>
            <person name="Ruan Y."/>
            <person name="Salzberg S.L."/>
            <person name="Sandelin A."/>
            <person name="Schneider C."/>
            <person name="Schoenbach C."/>
            <person name="Sekiguchi K."/>
            <person name="Semple C.A."/>
            <person name="Seno S."/>
            <person name="Sessa L."/>
            <person name="Sheng Y."/>
            <person name="Shibata Y."/>
            <person name="Shimada H."/>
            <person name="Shimada K."/>
            <person name="Silva D."/>
            <person name="Sinclair B."/>
            <person name="Sperling S."/>
            <person name="Stupka E."/>
            <person name="Sugiura K."/>
            <person name="Sultana R."/>
            <person name="Takenaka Y."/>
            <person name="Taki K."/>
            <person name="Tammoja K."/>
            <person name="Tan S.L."/>
            <person name="Tang S."/>
            <person name="Taylor M.S."/>
            <person name="Tegner J."/>
            <person name="Teichmann S.A."/>
            <person name="Ueda H.R."/>
            <person name="van Nimwegen E."/>
            <person name="Verardo R."/>
            <person name="Wei C.L."/>
            <person name="Yagi K."/>
            <person name="Yamanishi H."/>
            <person name="Zabarovsky E."/>
            <person name="Zhu S."/>
            <person name="Zimmer A."/>
            <person name="Hide W."/>
            <person name="Bult C."/>
            <person name="Grimmond S.M."/>
            <person name="Teasdale R.D."/>
            <person name="Liu E.T."/>
            <person name="Brusic V."/>
            <person name="Quackenbush J."/>
            <person name="Wahlestedt C."/>
            <person name="Mattick J.S."/>
            <person name="Hume D.A."/>
            <person name="Kai C."/>
            <person name="Sasaki D."/>
            <person name="Tomaru Y."/>
            <person name="Fukuda S."/>
            <person name="Kanamori-Katayama M."/>
            <person name="Suzuki M."/>
            <person name="Aoki J."/>
            <person name="Arakawa T."/>
            <person name="Iida J."/>
            <person name="Imamura K."/>
            <person name="Itoh M."/>
            <person name="Kato T."/>
            <person name="Kawaji H."/>
            <person name="Kawagashira N."/>
            <person name="Kawashima T."/>
            <person name="Kojima M."/>
            <person name="Kondo S."/>
            <person name="Konno H."/>
            <person name="Nakano K."/>
            <person name="Ninomiya N."/>
            <person name="Nishio T."/>
            <person name="Okada M."/>
            <person name="Plessy C."/>
            <person name="Shibata K."/>
            <person name="Shiraki T."/>
            <person name="Suzuki S."/>
            <person name="Tagami M."/>
            <person name="Waki K."/>
            <person name="Watahiki A."/>
            <person name="Okamura-Oho Y."/>
            <person name="Suzuki H."/>
            <person name="Kawai J."/>
            <person name="Hayashizaki Y."/>
        </authorList>
    </citation>
    <scope>NUCLEOTIDE SEQUENCE [LARGE SCALE MRNA] (ISOFORMS 1 AND 2)</scope>
    <source>
        <strain>C57BL/6J</strain>
        <tissue>Embryo</tissue>
        <tissue>Ovary</tissue>
    </source>
</reference>
<reference key="2">
    <citation type="journal article" date="2004" name="Genome Res.">
        <title>The status, quality, and expansion of the NIH full-length cDNA project: the Mammalian Gene Collection (MGC).</title>
        <authorList>
            <consortium name="The MGC Project Team"/>
        </authorList>
    </citation>
    <scope>NUCLEOTIDE SEQUENCE [LARGE SCALE MRNA] (ISOFORM 1)</scope>
    <source>
        <tissue>Mammary gland</tissue>
    </source>
</reference>
<reference key="3">
    <citation type="journal article" date="2014" name="PLoS Biol.">
        <title>Palmitoylation of gephyrin controls receptor clustering and plasticity of GABAergic synapses.</title>
        <authorList>
            <person name="Dejanovic B."/>
            <person name="Semtner M."/>
            <person name="Ebert S."/>
            <person name="Lamkemeyer T."/>
            <person name="Neuser F."/>
            <person name="Luescher B."/>
            <person name="Meier J.C."/>
            <person name="Schwarz G."/>
        </authorList>
    </citation>
    <scope>FUNCTION</scope>
    <scope>CATALYTIC ACTIVITY</scope>
    <scope>SUBCELLULAR LOCATION</scope>
    <scope>MUTAGENESIS OF CYS-127</scope>
    <scope>ACTIVE SITE</scope>
</reference>
<reference key="4">
    <citation type="journal article" date="2022" name="Mol. Cell">
        <title>Palmitoylation prevents sustained inflammation by limiting NLRP3 inflammasome activation through chaperone-mediated autophagy.</title>
        <authorList>
            <person name="Wang L."/>
            <person name="Cai J."/>
            <person name="Zhao X."/>
            <person name="Ma L."/>
            <person name="Zeng P."/>
            <person name="Zhou L."/>
            <person name="Liu Y."/>
            <person name="Yang S."/>
            <person name="Cai Z."/>
            <person name="Zhang S."/>
            <person name="Zhou L."/>
            <person name="Yang J."/>
            <person name="Liu T."/>
            <person name="Jin S."/>
            <person name="Cui J."/>
        </authorList>
    </citation>
    <scope>FUNCTION</scope>
    <scope>DISRUPTION PHENOTYPE</scope>
</reference>
<proteinExistence type="evidence at protein level"/>
<sequence>MALWPPLNSGMLVRTGHTVLTWGITLVLFLHDTELRQWEEQGELLLPLTFLLLVLSSLLLYLAVSLMDPGYVTTQPQPQGEPKEEQAAMVPQAVPLRRCRHCLVLQPLRARHCRDCRRCVRRYDHHCPWMENCVGERNHPLFVAYLALQLVVLLWGLCLAWSGLQFFQPWGLWLRSTGLLFTTFLLLSFFALVVALLLASHLYLVARNTTTWEFISSHRIAYLRQRTSNPFDRGPTRNLAHFFCGWPSGPWETLSAEEEEEGSSQVV</sequence>
<evidence type="ECO:0000250" key="1">
    <source>
        <dbReference type="UniProtKB" id="Q8IUH5"/>
    </source>
</evidence>
<evidence type="ECO:0000250" key="2">
    <source>
        <dbReference type="UniProtKB" id="Q96GR4"/>
    </source>
</evidence>
<evidence type="ECO:0000255" key="3"/>
<evidence type="ECO:0000255" key="4">
    <source>
        <dbReference type="PROSITE-ProRule" id="PRU00067"/>
    </source>
</evidence>
<evidence type="ECO:0000269" key="5">
    <source>
    </source>
</evidence>
<evidence type="ECO:0000269" key="6">
    <source>
    </source>
</evidence>
<evidence type="ECO:0000303" key="7">
    <source>
    </source>
</evidence>
<evidence type="ECO:0000305" key="8"/>
<evidence type="ECO:0000305" key="9">
    <source>
    </source>
</evidence>
<evidence type="ECO:0000312" key="10">
    <source>
        <dbReference type="MGI" id="MGI:1913470"/>
    </source>
</evidence>
<name>ZDH12_MOUSE</name>
<keyword id="KW-0012">Acyltransferase</keyword>
<keyword id="KW-0025">Alternative splicing</keyword>
<keyword id="KW-0256">Endoplasmic reticulum</keyword>
<keyword id="KW-0333">Golgi apparatus</keyword>
<keyword id="KW-0449">Lipoprotein</keyword>
<keyword id="KW-0472">Membrane</keyword>
<keyword id="KW-0564">Palmitate</keyword>
<keyword id="KW-1185">Reference proteome</keyword>
<keyword id="KW-0808">Transferase</keyword>
<keyword id="KW-0812">Transmembrane</keyword>
<keyword id="KW-1133">Transmembrane helix</keyword>
<feature type="chain" id="PRO_0000212885" description="Palmitoyltransferase ZDHHC12">
    <location>
        <begin position="1"/>
        <end position="267"/>
    </location>
</feature>
<feature type="topological domain" description="Cytoplasmic" evidence="8">
    <location>
        <begin position="1"/>
        <end position="9"/>
    </location>
</feature>
<feature type="transmembrane region" description="Helical" evidence="3">
    <location>
        <begin position="10"/>
        <end position="30"/>
    </location>
</feature>
<feature type="topological domain" description="Lumenal" evidence="8">
    <location>
        <begin position="31"/>
        <end position="43"/>
    </location>
</feature>
<feature type="transmembrane region" description="Helical" evidence="3">
    <location>
        <begin position="44"/>
        <end position="64"/>
    </location>
</feature>
<feature type="topological domain" description="Cytoplasmic" evidence="8">
    <location>
        <begin position="65"/>
        <end position="140"/>
    </location>
</feature>
<feature type="transmembrane region" description="Helical" evidence="3">
    <location>
        <begin position="141"/>
        <end position="161"/>
    </location>
</feature>
<feature type="topological domain" description="Lumenal" evidence="8">
    <location>
        <begin position="162"/>
        <end position="178"/>
    </location>
</feature>
<feature type="transmembrane region" description="Helical" evidence="3">
    <location>
        <begin position="179"/>
        <end position="199"/>
    </location>
</feature>
<feature type="topological domain" description="Cytoplasmic" evidence="8">
    <location>
        <begin position="200"/>
        <end position="267"/>
    </location>
</feature>
<feature type="domain" description="DHHC" evidence="4">
    <location>
        <begin position="97"/>
        <end position="147"/>
    </location>
</feature>
<feature type="active site" description="S-palmitoyl cysteine intermediate" evidence="9">
    <location>
        <position position="127"/>
    </location>
</feature>
<feature type="splice variant" id="VSP_006946" description="In isoform 2." evidence="7">
    <original>E</original>
    <variation>GEPDTAPPRAHPITQ</variation>
    <location>
        <position position="34"/>
    </location>
</feature>
<feature type="mutagenesis site" description="Loss of protein-cysteine S-palmitoyltransferase activity." evidence="9">
    <original>C</original>
    <variation>S</variation>
    <location>
        <position position="127"/>
    </location>
</feature>
<feature type="sequence conflict" description="In Ref. 1; AK013074." evidence="8" ref="1">
    <original>L</original>
    <variation>P</variation>
    <location>
        <position position="20"/>
    </location>
</feature>
<feature type="sequence conflict" description="In Ref. 1; BAC39965." evidence="8" ref="1">
    <original>L</original>
    <variation>F</variation>
    <location>
        <position position="179"/>
    </location>
</feature>
<comment type="function">
    <text evidence="5 6">Palmitoyltransferase that catalyzes the addition of palmitate onto various protein substrates (PubMed:25025157). Has a palmitoyltransferase activity toward gephyrin/GPHN, regulating its clustering at synapses and its function in gamma-aminobutyric acid receptor clustering (PubMed:25025157). Thereby, indirectly regulates GABAergic synaptic transmission (PubMed:25025157). Negatively regulates NLRP3-driven inflammation. Catalyzes NLRP3 palmitoylation, leading to its degradation via the chaperone-mediated autophagy (CMA) process.</text>
</comment>
<comment type="catalytic activity">
    <reaction evidence="9">
        <text>L-cysteinyl-[protein] + hexadecanoyl-CoA = S-hexadecanoyl-L-cysteinyl-[protein] + CoA</text>
        <dbReference type="Rhea" id="RHEA:36683"/>
        <dbReference type="Rhea" id="RHEA-COMP:10131"/>
        <dbReference type="Rhea" id="RHEA-COMP:11032"/>
        <dbReference type="ChEBI" id="CHEBI:29950"/>
        <dbReference type="ChEBI" id="CHEBI:57287"/>
        <dbReference type="ChEBI" id="CHEBI:57379"/>
        <dbReference type="ChEBI" id="CHEBI:74151"/>
        <dbReference type="EC" id="2.3.1.225"/>
    </reaction>
    <physiologicalReaction direction="left-to-right" evidence="9">
        <dbReference type="Rhea" id="RHEA:36684"/>
    </physiologicalReaction>
</comment>
<comment type="subcellular location">
    <subcellularLocation>
        <location evidence="5">Golgi apparatus membrane</location>
        <topology evidence="3">Multi-pass membrane protein</topology>
    </subcellularLocation>
    <subcellularLocation>
        <location evidence="2">Endoplasmic reticulum membrane</location>
        <topology evidence="3">Multi-pass membrane protein</topology>
    </subcellularLocation>
</comment>
<comment type="alternative products">
    <event type="alternative splicing"/>
    <isoform>
        <id>Q8VC90-1</id>
        <name>1</name>
        <sequence type="displayed"/>
    </isoform>
    <isoform>
        <id>Q8VC90-2</id>
        <name>2</name>
        <sequence type="described" ref="VSP_006946"/>
    </isoform>
</comment>
<comment type="domain">
    <text evidence="1">The DHHC domain is required for palmitoyltransferase activity.</text>
</comment>
<comment type="disruption phenotype">
    <text evidence="6">Mice display enhanced inflammatory symptoms and lethality following alum-induced peritonitis and LPS-induced endotoxic shock; defects are caused by an increased NLRP3 inflammasome activation.</text>
</comment>
<comment type="similarity">
    <text evidence="8">Belongs to the DHHC palmitoyltransferase family.</text>
</comment>
<comment type="sequence caution" evidence="8">
    <conflict type="frameshift">
        <sequence resource="EMBL" id="AK013074"/>
    </conflict>
</comment>